<reference key="1">
    <citation type="journal article" date="2007" name="Archaea">
        <title>The genome of Hyperthermus butylicus: a sulfur-reducing, peptide fermenting, neutrophilic Crenarchaeote growing up to 108 degrees C.</title>
        <authorList>
            <person name="Bruegger K."/>
            <person name="Chen L."/>
            <person name="Stark M."/>
            <person name="Zibat A."/>
            <person name="Redder P."/>
            <person name="Ruepp A."/>
            <person name="Awayez M."/>
            <person name="She Q."/>
            <person name="Garrett R.A."/>
            <person name="Klenk H.-P."/>
        </authorList>
    </citation>
    <scope>NUCLEOTIDE SEQUENCE [LARGE SCALE GENOMIC DNA]</scope>
    <source>
        <strain>DSM 5456 / JCM 9403 / PLM1-5</strain>
    </source>
</reference>
<name>RS4_HYPBU</name>
<sequence length="176" mass="20624">MGDPKKPRKKWMGPKHPWIKERLVRELELVGRYGLRNKRELWKLETLARYFRHRARSLLALPPEVREKEEKALLARLNELGVLPENATLDDVLNLTAEHFLERRLQTIVYKKGLARTIYEARQLIVHGHIAIAGRKIRSPGYLVKKDEEDLVDYAPTSPYAKRRLEEQVQQEEAAS</sequence>
<evidence type="ECO:0000255" key="1">
    <source>
        <dbReference type="HAMAP-Rule" id="MF_01306"/>
    </source>
</evidence>
<evidence type="ECO:0000305" key="2"/>
<gene>
    <name evidence="1" type="primary">rps4</name>
    <name type="ordered locus">Hbut_0528</name>
</gene>
<keyword id="KW-1185">Reference proteome</keyword>
<keyword id="KW-0687">Ribonucleoprotein</keyword>
<keyword id="KW-0689">Ribosomal protein</keyword>
<keyword id="KW-0694">RNA-binding</keyword>
<keyword id="KW-0699">rRNA-binding</keyword>
<accession>A2BK77</accession>
<feature type="chain" id="PRO_0000293403" description="Small ribosomal subunit protein uS4">
    <location>
        <begin position="1"/>
        <end position="176"/>
    </location>
</feature>
<feature type="domain" description="S4 RNA-binding" evidence="1">
    <location>
        <begin position="103"/>
        <end position="165"/>
    </location>
</feature>
<comment type="function">
    <text evidence="1">One of the primary rRNA binding proteins, it binds directly to 16S rRNA where it nucleates assembly of the body of the 30S subunit.</text>
</comment>
<comment type="function">
    <text evidence="1">With S5 and S12 plays an important role in translational accuracy.</text>
</comment>
<comment type="subunit">
    <text evidence="1">Part of the 30S ribosomal subunit. Contacts protein S5. The interaction surface between S4 and S5 is involved in control of translational fidelity.</text>
</comment>
<comment type="similarity">
    <text evidence="1">Belongs to the universal ribosomal protein uS4 family.</text>
</comment>
<protein>
    <recommendedName>
        <fullName evidence="1">Small ribosomal subunit protein uS4</fullName>
    </recommendedName>
    <alternativeName>
        <fullName evidence="2">30S ribosomal protein S4</fullName>
    </alternativeName>
</protein>
<proteinExistence type="inferred from homology"/>
<dbReference type="EMBL" id="CP000493">
    <property type="protein sequence ID" value="ABM80388.1"/>
    <property type="molecule type" value="Genomic_DNA"/>
</dbReference>
<dbReference type="RefSeq" id="WP_011821706.1">
    <property type="nucleotide sequence ID" value="NC_008818.1"/>
</dbReference>
<dbReference type="SMR" id="A2BK77"/>
<dbReference type="STRING" id="415426.Hbut_0528"/>
<dbReference type="EnsemblBacteria" id="ABM80388">
    <property type="protein sequence ID" value="ABM80388"/>
    <property type="gene ID" value="Hbut_0528"/>
</dbReference>
<dbReference type="GeneID" id="4782425"/>
<dbReference type="KEGG" id="hbu:Hbut_0528"/>
<dbReference type="eggNOG" id="arCOG04239">
    <property type="taxonomic scope" value="Archaea"/>
</dbReference>
<dbReference type="HOGENOM" id="CLU_089738_1_1_2"/>
<dbReference type="OrthoDB" id="10429at2157"/>
<dbReference type="Proteomes" id="UP000002593">
    <property type="component" value="Chromosome"/>
</dbReference>
<dbReference type="GO" id="GO:0015935">
    <property type="term" value="C:small ribosomal subunit"/>
    <property type="evidence" value="ECO:0007669"/>
    <property type="project" value="InterPro"/>
</dbReference>
<dbReference type="GO" id="GO:0019843">
    <property type="term" value="F:rRNA binding"/>
    <property type="evidence" value="ECO:0007669"/>
    <property type="project" value="UniProtKB-UniRule"/>
</dbReference>
<dbReference type="GO" id="GO:0003735">
    <property type="term" value="F:structural constituent of ribosome"/>
    <property type="evidence" value="ECO:0007669"/>
    <property type="project" value="InterPro"/>
</dbReference>
<dbReference type="GO" id="GO:0042274">
    <property type="term" value="P:ribosomal small subunit biogenesis"/>
    <property type="evidence" value="ECO:0007669"/>
    <property type="project" value="TreeGrafter"/>
</dbReference>
<dbReference type="GO" id="GO:0006412">
    <property type="term" value="P:translation"/>
    <property type="evidence" value="ECO:0007669"/>
    <property type="project" value="UniProtKB-UniRule"/>
</dbReference>
<dbReference type="CDD" id="cd00165">
    <property type="entry name" value="S4"/>
    <property type="match status" value="1"/>
</dbReference>
<dbReference type="Gene3D" id="3.10.290.10">
    <property type="entry name" value="RNA-binding S4 domain"/>
    <property type="match status" value="1"/>
</dbReference>
<dbReference type="HAMAP" id="MF_01306_A">
    <property type="entry name" value="Ribosomal_uS4_A"/>
    <property type="match status" value="1"/>
</dbReference>
<dbReference type="InterPro" id="IPR022801">
    <property type="entry name" value="Ribosomal_uS4"/>
</dbReference>
<dbReference type="InterPro" id="IPR022802">
    <property type="entry name" value="Ribosomal_uS4_arc"/>
</dbReference>
<dbReference type="InterPro" id="IPR018079">
    <property type="entry name" value="Ribosomal_uS4_CS"/>
</dbReference>
<dbReference type="InterPro" id="IPR005710">
    <property type="entry name" value="Ribosomal_uS4_euk/arc"/>
</dbReference>
<dbReference type="InterPro" id="IPR001912">
    <property type="entry name" value="Ribosomal_uS4_N"/>
</dbReference>
<dbReference type="InterPro" id="IPR002942">
    <property type="entry name" value="S4_RNA-bd"/>
</dbReference>
<dbReference type="InterPro" id="IPR036986">
    <property type="entry name" value="S4_RNA-bd_sf"/>
</dbReference>
<dbReference type="NCBIfam" id="NF003139">
    <property type="entry name" value="PRK04051.1"/>
    <property type="match status" value="1"/>
</dbReference>
<dbReference type="NCBIfam" id="TIGR01018">
    <property type="entry name" value="uS4_arch"/>
    <property type="match status" value="1"/>
</dbReference>
<dbReference type="PANTHER" id="PTHR11831">
    <property type="entry name" value="30S 40S RIBOSOMAL PROTEIN"/>
    <property type="match status" value="1"/>
</dbReference>
<dbReference type="PANTHER" id="PTHR11831:SF5">
    <property type="entry name" value="40S RIBOSOMAL PROTEIN S9"/>
    <property type="match status" value="1"/>
</dbReference>
<dbReference type="Pfam" id="PF00163">
    <property type="entry name" value="Ribosomal_S4"/>
    <property type="match status" value="1"/>
</dbReference>
<dbReference type="Pfam" id="PF01479">
    <property type="entry name" value="S4"/>
    <property type="match status" value="1"/>
</dbReference>
<dbReference type="SMART" id="SM01390">
    <property type="entry name" value="Ribosomal_S4"/>
    <property type="match status" value="1"/>
</dbReference>
<dbReference type="SMART" id="SM00363">
    <property type="entry name" value="S4"/>
    <property type="match status" value="1"/>
</dbReference>
<dbReference type="SUPFAM" id="SSF55174">
    <property type="entry name" value="Alpha-L RNA-binding motif"/>
    <property type="match status" value="1"/>
</dbReference>
<dbReference type="PROSITE" id="PS00632">
    <property type="entry name" value="RIBOSOMAL_S4"/>
    <property type="match status" value="1"/>
</dbReference>
<dbReference type="PROSITE" id="PS50889">
    <property type="entry name" value="S4"/>
    <property type="match status" value="1"/>
</dbReference>
<organism>
    <name type="scientific">Hyperthermus butylicus (strain DSM 5456 / JCM 9403 / PLM1-5)</name>
    <dbReference type="NCBI Taxonomy" id="415426"/>
    <lineage>
        <taxon>Archaea</taxon>
        <taxon>Thermoproteota</taxon>
        <taxon>Thermoprotei</taxon>
        <taxon>Desulfurococcales</taxon>
        <taxon>Pyrodictiaceae</taxon>
        <taxon>Hyperthermus</taxon>
    </lineage>
</organism>